<reference key="1">
    <citation type="journal article" date="2000" name="Nature">
        <title>Complete DNA sequence of a serogroup A strain of Neisseria meningitidis Z2491.</title>
        <authorList>
            <person name="Parkhill J."/>
            <person name="Achtman M."/>
            <person name="James K.D."/>
            <person name="Bentley S.D."/>
            <person name="Churcher C.M."/>
            <person name="Klee S.R."/>
            <person name="Morelli G."/>
            <person name="Basham D."/>
            <person name="Brown D."/>
            <person name="Chillingworth T."/>
            <person name="Davies R.M."/>
            <person name="Davis P."/>
            <person name="Devlin K."/>
            <person name="Feltwell T."/>
            <person name="Hamlin N."/>
            <person name="Holroyd S."/>
            <person name="Jagels K."/>
            <person name="Leather S."/>
            <person name="Moule S."/>
            <person name="Mungall K.L."/>
            <person name="Quail M.A."/>
            <person name="Rajandream M.A."/>
            <person name="Rutherford K.M."/>
            <person name="Simmonds M."/>
            <person name="Skelton J."/>
            <person name="Whitehead S."/>
            <person name="Spratt B.G."/>
            <person name="Barrell B.G."/>
        </authorList>
    </citation>
    <scope>NUCLEOTIDE SEQUENCE [LARGE SCALE GENOMIC DNA]</scope>
    <source>
        <strain>DSM 15465 / Z2491</strain>
    </source>
</reference>
<gene>
    <name evidence="1" type="primary">tsf</name>
    <name type="ordered locus">NMA0327</name>
</gene>
<feature type="chain" id="PRO_0000161161" description="Elongation factor Ts">
    <location>
        <begin position="1"/>
        <end position="284"/>
    </location>
</feature>
<feature type="region of interest" description="Involved in Mg(2+) ion dislocation from EF-Tu" evidence="1">
    <location>
        <begin position="80"/>
        <end position="83"/>
    </location>
</feature>
<sequence>MAEITAKMVADLRAATGLGMMECKKALVEAEGNFDKAEEILRIKSGAKAGKLAGRTAAEGVLAYAINGNVGALVEVNCETDFVAKDAGFVEFANFVAKTAAEKKPASVEELSELVEAERKAIIAKLGENMSVRRFQVIDTANQLVAYIHGALATEGVLVEYKGSEDVARKIGMHIVAAKPQCVSEAEVDAETVEKERHIYTEQAIASGKPADIAAKMVEGRIRKFLAEITLNGQAFVMNPDQTVAQFSKENGTEVISFVRYKVGDGIEKKAVDYAAEVAAAAKV</sequence>
<accession>P64050</accession>
<accession>A1IPG0</accession>
<accession>Q9JRH4</accession>
<protein>
    <recommendedName>
        <fullName evidence="1">Elongation factor Ts</fullName>
        <shortName evidence="1">EF-Ts</shortName>
    </recommendedName>
</protein>
<dbReference type="EMBL" id="AL157959">
    <property type="protein sequence ID" value="CAM07629.1"/>
    <property type="molecule type" value="Genomic_DNA"/>
</dbReference>
<dbReference type="RefSeq" id="WP_002218222.1">
    <property type="nucleotide sequence ID" value="NC_003116.1"/>
</dbReference>
<dbReference type="SMR" id="P64050"/>
<dbReference type="EnsemblBacteria" id="CAM07629">
    <property type="protein sequence ID" value="CAM07629"/>
    <property type="gene ID" value="NMA0327"/>
</dbReference>
<dbReference type="KEGG" id="nma:NMA0327"/>
<dbReference type="HOGENOM" id="CLU_047155_0_2_4"/>
<dbReference type="Proteomes" id="UP000000626">
    <property type="component" value="Chromosome"/>
</dbReference>
<dbReference type="GO" id="GO:0005737">
    <property type="term" value="C:cytoplasm"/>
    <property type="evidence" value="ECO:0007669"/>
    <property type="project" value="UniProtKB-SubCell"/>
</dbReference>
<dbReference type="GO" id="GO:0003746">
    <property type="term" value="F:translation elongation factor activity"/>
    <property type="evidence" value="ECO:0007669"/>
    <property type="project" value="UniProtKB-UniRule"/>
</dbReference>
<dbReference type="CDD" id="cd14275">
    <property type="entry name" value="UBA_EF-Ts"/>
    <property type="match status" value="1"/>
</dbReference>
<dbReference type="FunFam" id="1.10.286.20:FF:000001">
    <property type="entry name" value="Elongation factor Ts"/>
    <property type="match status" value="1"/>
</dbReference>
<dbReference type="FunFam" id="1.10.8.10:FF:000001">
    <property type="entry name" value="Elongation factor Ts"/>
    <property type="match status" value="1"/>
</dbReference>
<dbReference type="FunFam" id="3.30.479.20:FF:000001">
    <property type="entry name" value="Elongation factor Ts"/>
    <property type="match status" value="1"/>
</dbReference>
<dbReference type="Gene3D" id="1.10.286.20">
    <property type="match status" value="1"/>
</dbReference>
<dbReference type="Gene3D" id="1.10.8.10">
    <property type="entry name" value="DNA helicase RuvA subunit, C-terminal domain"/>
    <property type="match status" value="1"/>
</dbReference>
<dbReference type="Gene3D" id="3.30.479.20">
    <property type="entry name" value="Elongation factor Ts, dimerisation domain"/>
    <property type="match status" value="2"/>
</dbReference>
<dbReference type="HAMAP" id="MF_00050">
    <property type="entry name" value="EF_Ts"/>
    <property type="match status" value="1"/>
</dbReference>
<dbReference type="InterPro" id="IPR036402">
    <property type="entry name" value="EF-Ts_dimer_sf"/>
</dbReference>
<dbReference type="InterPro" id="IPR001816">
    <property type="entry name" value="Transl_elong_EFTs/EF1B"/>
</dbReference>
<dbReference type="InterPro" id="IPR014039">
    <property type="entry name" value="Transl_elong_EFTs/EF1B_dimer"/>
</dbReference>
<dbReference type="InterPro" id="IPR018101">
    <property type="entry name" value="Transl_elong_Ts_CS"/>
</dbReference>
<dbReference type="InterPro" id="IPR009060">
    <property type="entry name" value="UBA-like_sf"/>
</dbReference>
<dbReference type="NCBIfam" id="TIGR00116">
    <property type="entry name" value="tsf"/>
    <property type="match status" value="1"/>
</dbReference>
<dbReference type="PANTHER" id="PTHR11741">
    <property type="entry name" value="ELONGATION FACTOR TS"/>
    <property type="match status" value="1"/>
</dbReference>
<dbReference type="PANTHER" id="PTHR11741:SF0">
    <property type="entry name" value="ELONGATION FACTOR TS, MITOCHONDRIAL"/>
    <property type="match status" value="1"/>
</dbReference>
<dbReference type="Pfam" id="PF00889">
    <property type="entry name" value="EF_TS"/>
    <property type="match status" value="1"/>
</dbReference>
<dbReference type="SUPFAM" id="SSF54713">
    <property type="entry name" value="Elongation factor Ts (EF-Ts), dimerisation domain"/>
    <property type="match status" value="2"/>
</dbReference>
<dbReference type="SUPFAM" id="SSF46934">
    <property type="entry name" value="UBA-like"/>
    <property type="match status" value="1"/>
</dbReference>
<dbReference type="PROSITE" id="PS01126">
    <property type="entry name" value="EF_TS_1"/>
    <property type="match status" value="1"/>
</dbReference>
<dbReference type="PROSITE" id="PS01127">
    <property type="entry name" value="EF_TS_2"/>
    <property type="match status" value="1"/>
</dbReference>
<name>EFTS_NEIMA</name>
<keyword id="KW-0963">Cytoplasm</keyword>
<keyword id="KW-0251">Elongation factor</keyword>
<keyword id="KW-0648">Protein biosynthesis</keyword>
<organism>
    <name type="scientific">Neisseria meningitidis serogroup A / serotype 4A (strain DSM 15465 / Z2491)</name>
    <dbReference type="NCBI Taxonomy" id="122587"/>
    <lineage>
        <taxon>Bacteria</taxon>
        <taxon>Pseudomonadati</taxon>
        <taxon>Pseudomonadota</taxon>
        <taxon>Betaproteobacteria</taxon>
        <taxon>Neisseriales</taxon>
        <taxon>Neisseriaceae</taxon>
        <taxon>Neisseria</taxon>
    </lineage>
</organism>
<evidence type="ECO:0000255" key="1">
    <source>
        <dbReference type="HAMAP-Rule" id="MF_00050"/>
    </source>
</evidence>
<comment type="function">
    <text evidence="1">Associates with the EF-Tu.GDP complex and induces the exchange of GDP to GTP. It remains bound to the aminoacyl-tRNA.EF-Tu.GTP complex up to the GTP hydrolysis stage on the ribosome.</text>
</comment>
<comment type="subcellular location">
    <subcellularLocation>
        <location evidence="1">Cytoplasm</location>
    </subcellularLocation>
</comment>
<comment type="similarity">
    <text evidence="1">Belongs to the EF-Ts family.</text>
</comment>
<proteinExistence type="inferred from homology"/>